<keyword id="KW-0256">Endoplasmic reticulum</keyword>
<keyword id="KW-0325">Glycoprotein</keyword>
<keyword id="KW-0333">Golgi apparatus</keyword>
<keyword id="KW-0340">Growth factor binding</keyword>
<keyword id="KW-0472">Membrane</keyword>
<keyword id="KW-0597">Phosphoprotein</keyword>
<keyword id="KW-0653">Protein transport</keyword>
<keyword id="KW-1185">Reference proteome</keyword>
<keyword id="KW-0812">Transmembrane</keyword>
<keyword id="KW-1133">Transmembrane helix</keyword>
<keyword id="KW-0813">Transport</keyword>
<evidence type="ECO:0000250" key="1">
    <source>
        <dbReference type="UniProtKB" id="Q6PIX5"/>
    </source>
</evidence>
<evidence type="ECO:0000250" key="2">
    <source>
        <dbReference type="UniProtKB" id="Q96CC6"/>
    </source>
</evidence>
<evidence type="ECO:0000255" key="3"/>
<evidence type="ECO:0000256" key="4">
    <source>
        <dbReference type="SAM" id="MobiDB-lite"/>
    </source>
</evidence>
<evidence type="ECO:0000305" key="5"/>
<dbReference type="EMBL" id="DP000504">
    <property type="protein sequence ID" value="ABX52099.1"/>
    <property type="molecule type" value="Genomic_DNA"/>
</dbReference>
<dbReference type="RefSeq" id="NP_001162285.1">
    <property type="nucleotide sequence ID" value="NM_001168814.1"/>
</dbReference>
<dbReference type="SMR" id="A9L8T6"/>
<dbReference type="STRING" id="9555.ENSPANP00000024197"/>
<dbReference type="MEROPS" id="S54.952"/>
<dbReference type="GlyCosmos" id="A9L8T6">
    <property type="glycosylation" value="1 site, No reported glycans"/>
</dbReference>
<dbReference type="GeneID" id="100137277"/>
<dbReference type="CTD" id="64285"/>
<dbReference type="eggNOG" id="KOG2290">
    <property type="taxonomic scope" value="Eukaryota"/>
</dbReference>
<dbReference type="HOGENOM" id="CLU_011531_1_1_1"/>
<dbReference type="Proteomes" id="UP000028761">
    <property type="component" value="Unplaced"/>
</dbReference>
<dbReference type="Bgee" id="ENSPANG00000000422">
    <property type="expression patterns" value="Expressed in lateral hypothalamic nucleus and 66 other cell types or tissues"/>
</dbReference>
<dbReference type="GO" id="GO:0005789">
    <property type="term" value="C:endoplasmic reticulum membrane"/>
    <property type="evidence" value="ECO:0000250"/>
    <property type="project" value="UniProtKB"/>
</dbReference>
<dbReference type="GO" id="GO:0000139">
    <property type="term" value="C:Golgi membrane"/>
    <property type="evidence" value="ECO:0000250"/>
    <property type="project" value="UniProtKB"/>
</dbReference>
<dbReference type="GO" id="GO:0019838">
    <property type="term" value="F:growth factor binding"/>
    <property type="evidence" value="ECO:0007669"/>
    <property type="project" value="UniProtKB-KW"/>
</dbReference>
<dbReference type="GO" id="GO:0004252">
    <property type="term" value="F:serine-type endopeptidase activity"/>
    <property type="evidence" value="ECO:0007669"/>
    <property type="project" value="InterPro"/>
</dbReference>
<dbReference type="GO" id="GO:0016477">
    <property type="term" value="P:cell migration"/>
    <property type="evidence" value="ECO:0000250"/>
    <property type="project" value="UniProtKB"/>
</dbReference>
<dbReference type="GO" id="GO:0008283">
    <property type="term" value="P:cell population proliferation"/>
    <property type="evidence" value="ECO:0000250"/>
    <property type="project" value="UniProtKB"/>
</dbReference>
<dbReference type="GO" id="GO:0050709">
    <property type="term" value="P:negative regulation of protein secretion"/>
    <property type="evidence" value="ECO:0000250"/>
    <property type="project" value="UniProtKB"/>
</dbReference>
<dbReference type="GO" id="GO:0015031">
    <property type="term" value="P:protein transport"/>
    <property type="evidence" value="ECO:0007669"/>
    <property type="project" value="UniProtKB-KW"/>
</dbReference>
<dbReference type="GO" id="GO:0042058">
    <property type="term" value="P:regulation of epidermal growth factor receptor signaling pathway"/>
    <property type="evidence" value="ECO:0000250"/>
    <property type="project" value="UniProtKB"/>
</dbReference>
<dbReference type="GO" id="GO:0061136">
    <property type="term" value="P:regulation of proteasomal protein catabolic process"/>
    <property type="evidence" value="ECO:0000250"/>
    <property type="project" value="UniProtKB"/>
</dbReference>
<dbReference type="FunFam" id="1.20.1540.10:FF:000001">
    <property type="entry name" value="Putative inactive rhomboid protein 1"/>
    <property type="match status" value="1"/>
</dbReference>
<dbReference type="Gene3D" id="1.20.1540.10">
    <property type="entry name" value="Rhomboid-like"/>
    <property type="match status" value="1"/>
</dbReference>
<dbReference type="InterPro" id="IPR051512">
    <property type="entry name" value="Inactive_Rhomboid"/>
</dbReference>
<dbReference type="InterPro" id="IPR022241">
    <property type="entry name" value="iRhom1_2_N"/>
</dbReference>
<dbReference type="InterPro" id="IPR022764">
    <property type="entry name" value="Peptidase_S54_rhomboid_dom"/>
</dbReference>
<dbReference type="InterPro" id="IPR035952">
    <property type="entry name" value="Rhomboid-like_sf"/>
</dbReference>
<dbReference type="PANTHER" id="PTHR45965">
    <property type="entry name" value="INACTIVE RHOMBOID PROTEIN"/>
    <property type="match status" value="1"/>
</dbReference>
<dbReference type="PANTHER" id="PTHR45965:SF4">
    <property type="entry name" value="INACTIVE RHOMBOID PROTEIN 1"/>
    <property type="match status" value="1"/>
</dbReference>
<dbReference type="Pfam" id="PF12595">
    <property type="entry name" value="iRhom1-2_N"/>
    <property type="match status" value="1"/>
</dbReference>
<dbReference type="Pfam" id="PF01694">
    <property type="entry name" value="Rhomboid"/>
    <property type="match status" value="1"/>
</dbReference>
<dbReference type="SUPFAM" id="SSF144091">
    <property type="entry name" value="Rhomboid-like"/>
    <property type="match status" value="1"/>
</dbReference>
<comment type="function">
    <text evidence="2">Regulates ADAM17 protease, a sheddase of the epidermal growth factor (EGF) receptor ligands and TNF, thereby plays a role in sleep, cell survival, proliferation, migration and inflammation. Does not exhibit any protease activity on its own.</text>
</comment>
<comment type="subunit">
    <text evidence="2">Homodimer, or homooligomer. Interacts with TGFA and HBEGF. Interacts with EGF; may retain EGF in the endoplasmic reticulum and regulates its degradation through the endoplasmic reticulum-associated degradation (ERAD). Interacts (via cytoplasmic N-terminus) with FRMD8/iTAP; this interaction leads to mutual protein stabilization. Interacts with ADAM17/TACE.</text>
</comment>
<comment type="subcellular location">
    <subcellularLocation>
        <location evidence="2">Endoplasmic reticulum membrane</location>
        <topology evidence="3">Multi-pass membrane protein</topology>
    </subcellularLocation>
    <subcellularLocation>
        <location evidence="2">Golgi apparatus membrane</location>
        <topology evidence="3">Multi-pass membrane protein</topology>
    </subcellularLocation>
    <text evidence="2">Predominantly localized in the endoplasmic reticulum membrane.</text>
</comment>
<comment type="similarity">
    <text evidence="5">Belongs to the peptidase S54 family.</text>
</comment>
<accession>A9L8T6</accession>
<reference key="1">
    <citation type="submission" date="2007-11" db="EMBL/GenBank/DDBJ databases">
        <title>NISC comparative sequencing initiative.</title>
        <authorList>
            <person name="Antonellis A."/>
            <person name="Benjamin B."/>
            <person name="Blakesley R.W."/>
            <person name="Bouffard G.G."/>
            <person name="Brinkley C."/>
            <person name="Brooks S."/>
            <person name="Chu G."/>
            <person name="Chub I."/>
            <person name="Coleman H."/>
            <person name="Fuksenko T."/>
            <person name="Gestole M."/>
            <person name="Gregory M."/>
            <person name="Guan X."/>
            <person name="Gupta J."/>
            <person name="Gurson N."/>
            <person name="Han E."/>
            <person name="Han J."/>
            <person name="Hansen N."/>
            <person name="Hargrove A."/>
            <person name="Hines-Harris K."/>
            <person name="Ho S.-L."/>
            <person name="Hu P."/>
            <person name="Hunter G."/>
            <person name="Hurle B."/>
            <person name="Idol J.R."/>
            <person name="Johnson T."/>
            <person name="Knight E."/>
            <person name="Kwong P."/>
            <person name="Lee-Lin S.-Q."/>
            <person name="Legaspi R."/>
            <person name="Madden M."/>
            <person name="Maduro Q.L."/>
            <person name="Maduro V.B."/>
            <person name="Margulies E.H."/>
            <person name="Masiello C."/>
            <person name="Maskeri B."/>
            <person name="McDowell J."/>
            <person name="Merkulov G."/>
            <person name="Montemayor C."/>
            <person name="Mullikin J.C."/>
            <person name="Park M."/>
            <person name="Prasad A."/>
            <person name="Ramsahoye C."/>
            <person name="Reddix-Dugue N."/>
            <person name="Riebow N."/>
            <person name="Schandler K."/>
            <person name="Schueler M.G."/>
            <person name="Sison C."/>
            <person name="Smith L."/>
            <person name="Stantripop S."/>
            <person name="Thomas J.W."/>
            <person name="Thomas P.J."/>
            <person name="Tsipouri V."/>
            <person name="Young A."/>
            <person name="Green E.D."/>
        </authorList>
    </citation>
    <scope>NUCLEOTIDE SEQUENCE [LARGE SCALE GENOMIC DNA]</scope>
</reference>
<gene>
    <name type="primary">RHBDF1</name>
</gene>
<feature type="chain" id="PRO_0000340109" description="Inactive rhomboid protein 1">
    <location>
        <begin position="1"/>
        <end position="855"/>
    </location>
</feature>
<feature type="topological domain" description="Cytoplasmic" evidence="3">
    <location>
        <begin position="1"/>
        <end position="411"/>
    </location>
</feature>
<feature type="transmembrane region" description="Helical" evidence="3">
    <location>
        <begin position="412"/>
        <end position="432"/>
    </location>
</feature>
<feature type="topological domain" description="Lumenal" evidence="3">
    <location>
        <begin position="433"/>
        <end position="655"/>
    </location>
</feature>
<feature type="transmembrane region" description="Helical" evidence="3">
    <location>
        <begin position="656"/>
        <end position="676"/>
    </location>
</feature>
<feature type="topological domain" description="Cytoplasmic" evidence="3">
    <location>
        <begin position="677"/>
        <end position="691"/>
    </location>
</feature>
<feature type="transmembrane region" description="Helical" evidence="3">
    <location>
        <begin position="692"/>
        <end position="712"/>
    </location>
</feature>
<feature type="topological domain" description="Lumenal" evidence="3">
    <location>
        <begin position="713"/>
        <end position="714"/>
    </location>
</feature>
<feature type="transmembrane region" description="Helical" evidence="3">
    <location>
        <begin position="715"/>
        <end position="735"/>
    </location>
</feature>
<feature type="topological domain" description="Cytoplasmic" evidence="3">
    <location>
        <begin position="736"/>
        <end position="746"/>
    </location>
</feature>
<feature type="transmembrane region" description="Helical" evidence="3">
    <location>
        <begin position="747"/>
        <end position="767"/>
    </location>
</feature>
<feature type="topological domain" description="Lumenal" evidence="3">
    <location>
        <begin position="768"/>
        <end position="772"/>
    </location>
</feature>
<feature type="transmembrane region" description="Helical" evidence="3">
    <location>
        <begin position="773"/>
        <end position="793"/>
    </location>
</feature>
<feature type="topological domain" description="Cytoplasmic" evidence="3">
    <location>
        <begin position="794"/>
        <end position="803"/>
    </location>
</feature>
<feature type="transmembrane region" description="Helical" evidence="3">
    <location>
        <begin position="804"/>
        <end position="824"/>
    </location>
</feature>
<feature type="topological domain" description="Lumenal" evidence="3">
    <location>
        <begin position="825"/>
        <end position="855"/>
    </location>
</feature>
<feature type="region of interest" description="Disordered" evidence="4">
    <location>
        <begin position="1"/>
        <end position="36"/>
    </location>
</feature>
<feature type="modified residue" description="Phosphoserine" evidence="2">
    <location>
        <position position="76"/>
    </location>
</feature>
<feature type="modified residue" description="Phosphoserine" evidence="1">
    <location>
        <position position="176"/>
    </location>
</feature>
<feature type="modified residue" description="Phosphothreonine" evidence="1">
    <location>
        <position position="180"/>
    </location>
</feature>
<feature type="modified residue" description="Phosphothreonine" evidence="1">
    <location>
        <position position="183"/>
    </location>
</feature>
<feature type="modified residue" description="Phosphoserine" evidence="2">
    <location>
        <position position="390"/>
    </location>
</feature>
<feature type="glycosylation site" description="N-linked (GlcNAc...) asparagine" evidence="3">
    <location>
        <position position="583"/>
    </location>
</feature>
<protein>
    <recommendedName>
        <fullName>Inactive rhomboid protein 1</fullName>
        <shortName>iRhom1</shortName>
    </recommendedName>
    <alternativeName>
        <fullName>Rhomboid family member 1</fullName>
    </alternativeName>
</protein>
<sequence>MSEARRDSTSSLQRKKPPWLKLDIPSAVPPTAEEPSFLQPLRRQAFLRSVSMPAETAHISSPHHELRRSVLQRQTSITQTIRRGTADWFGVSKDSDSTQKWQRKSIRHCSQRYGKLKPQVLRELDLPSQDNVSLTSTETPPPLYVGPCQLGMQKIIDPLARGRAFRVADDTAEGLSAPHTPVTPGAASLCSFSSSRSGFHRLPRRRKRESVAKMSFRAAAALMKGRSVRDGTLRRAQRRSFTPASFLEEDTTDFPDELDTSFFAREGILHEELSTYPDEVFESPSEAALKDWEKAPEQADLTGGALDRSELERSHLMLPLERGWRKQKEGAAAPQPKVRLRQEVVSTAGPRRGQRIAVPVRKLFAREKRPYGLGMVGRLTNRTYRKRIDSFVKRQIEDMDDHRPFFTYWLTFVHSLVTILAVCIYGIAPVGFSQHETVDSVLRNRGVYENVKYVQQENFWIGPSSEALIHLGAKFSPCMRQDPQVHSFIRSAREREKHSACCVRNDRSGCVQTSEEECSSTLAVWVKWPIHPSAPELAGHKRQFGSVCHQDPRVCDEPSSEDPHEWPEDITKWPICTKNSAGNHTNHPHMDCVITGRPCCIGTKGRCEITSREYCDFMRGYFHEEATLCSQVHCMDDVCGLLPFLNPEVPDQFYRLWLSLFLHAGILHCLVSICFQMTVLRDLEKLAGWHRIAIIYLLSGVTGNLASAIFLPYRAEVGPAGSQFGILACLFVELFQSWQILARPWRAFFKLLAVVLFLFTFGLLPWIDNFAHISGFISGLFLSFAFLPYISFGKFDLYRKRCQIIIFQVVFLGLLAGLVVLFYFYPVRCEWCEFLTCIPFTDKFCEKYELDAQLH</sequence>
<name>RHDF1_PAPAN</name>
<organism>
    <name type="scientific">Papio anubis</name>
    <name type="common">Olive baboon</name>
    <dbReference type="NCBI Taxonomy" id="9555"/>
    <lineage>
        <taxon>Eukaryota</taxon>
        <taxon>Metazoa</taxon>
        <taxon>Chordata</taxon>
        <taxon>Craniata</taxon>
        <taxon>Vertebrata</taxon>
        <taxon>Euteleostomi</taxon>
        <taxon>Mammalia</taxon>
        <taxon>Eutheria</taxon>
        <taxon>Euarchontoglires</taxon>
        <taxon>Primates</taxon>
        <taxon>Haplorrhini</taxon>
        <taxon>Catarrhini</taxon>
        <taxon>Cercopithecidae</taxon>
        <taxon>Cercopithecinae</taxon>
        <taxon>Papio</taxon>
    </lineage>
</organism>
<proteinExistence type="inferred from homology"/>